<reference key="1">
    <citation type="journal article" date="2007" name="Mol. Biol. Evol.">
        <title>Disulfide-bond reshuffling in the evolution of an ape placental ribonuclease.</title>
        <authorList>
            <person name="Zhang J."/>
        </authorList>
    </citation>
    <scope>NUCLEOTIDE SEQUENCE [GENOMIC DNA]</scope>
</reference>
<comment type="function">
    <text evidence="1">Has a low ribonuclease activity.</text>
</comment>
<comment type="subcellular location">
    <subcellularLocation>
        <location evidence="3">Secreted</location>
    </subcellularLocation>
</comment>
<comment type="similarity">
    <text evidence="3">Belongs to the pancreatic ribonuclease family.</text>
</comment>
<keyword id="KW-1015">Disulfide bond</keyword>
<keyword id="KW-0255">Endonuclease</keyword>
<keyword id="KW-0378">Hydrolase</keyword>
<keyword id="KW-0540">Nuclease</keyword>
<keyword id="KW-0964">Secreted</keyword>
<keyword id="KW-0732">Signal</keyword>
<gene>
    <name type="primary">RNASE8</name>
</gene>
<evidence type="ECO:0000250" key="1"/>
<evidence type="ECO:0000255" key="2"/>
<evidence type="ECO:0000305" key="3"/>
<organism>
    <name type="scientific">Pongo pygmaeus</name>
    <name type="common">Bornean orangutan</name>
    <dbReference type="NCBI Taxonomy" id="9600"/>
    <lineage>
        <taxon>Eukaryota</taxon>
        <taxon>Metazoa</taxon>
        <taxon>Chordata</taxon>
        <taxon>Craniata</taxon>
        <taxon>Vertebrata</taxon>
        <taxon>Euteleostomi</taxon>
        <taxon>Mammalia</taxon>
        <taxon>Eutheria</taxon>
        <taxon>Euarchontoglires</taxon>
        <taxon>Primates</taxon>
        <taxon>Haplorrhini</taxon>
        <taxon>Catarrhini</taxon>
        <taxon>Hominidae</taxon>
        <taxon>Pongo</taxon>
    </lineage>
</organism>
<dbReference type="EC" id="3.1.27.-"/>
<dbReference type="EMBL" id="EF100699">
    <property type="protein sequence ID" value="ABM54090.1"/>
    <property type="molecule type" value="Genomic_DNA"/>
</dbReference>
<dbReference type="SMR" id="A1YLB9"/>
<dbReference type="GO" id="GO:0005615">
    <property type="term" value="C:extracellular space"/>
    <property type="evidence" value="ECO:0007669"/>
    <property type="project" value="TreeGrafter"/>
</dbReference>
<dbReference type="GO" id="GO:0004519">
    <property type="term" value="F:endonuclease activity"/>
    <property type="evidence" value="ECO:0007669"/>
    <property type="project" value="UniProtKB-KW"/>
</dbReference>
<dbReference type="GO" id="GO:0003676">
    <property type="term" value="F:nucleic acid binding"/>
    <property type="evidence" value="ECO:0007669"/>
    <property type="project" value="InterPro"/>
</dbReference>
<dbReference type="GO" id="GO:0004540">
    <property type="term" value="F:RNA nuclease activity"/>
    <property type="evidence" value="ECO:0007669"/>
    <property type="project" value="TreeGrafter"/>
</dbReference>
<dbReference type="GO" id="GO:0050832">
    <property type="term" value="P:defense response to fungus"/>
    <property type="evidence" value="ECO:0007669"/>
    <property type="project" value="TreeGrafter"/>
</dbReference>
<dbReference type="GO" id="GO:0050829">
    <property type="term" value="P:defense response to Gram-negative bacterium"/>
    <property type="evidence" value="ECO:0007669"/>
    <property type="project" value="TreeGrafter"/>
</dbReference>
<dbReference type="GO" id="GO:0050830">
    <property type="term" value="P:defense response to Gram-positive bacterium"/>
    <property type="evidence" value="ECO:0007669"/>
    <property type="project" value="TreeGrafter"/>
</dbReference>
<dbReference type="GO" id="GO:0045087">
    <property type="term" value="P:innate immune response"/>
    <property type="evidence" value="ECO:0007669"/>
    <property type="project" value="TreeGrafter"/>
</dbReference>
<dbReference type="CDD" id="cd06265">
    <property type="entry name" value="RNase_A_canonical"/>
    <property type="match status" value="1"/>
</dbReference>
<dbReference type="FunFam" id="3.10.130.10:FF:000001">
    <property type="entry name" value="Ribonuclease pancreatic"/>
    <property type="match status" value="1"/>
</dbReference>
<dbReference type="Gene3D" id="3.10.130.10">
    <property type="entry name" value="Ribonuclease A-like domain"/>
    <property type="match status" value="1"/>
</dbReference>
<dbReference type="InterPro" id="IPR001427">
    <property type="entry name" value="RNaseA"/>
</dbReference>
<dbReference type="InterPro" id="IPR036816">
    <property type="entry name" value="RNaseA-like_dom_sf"/>
</dbReference>
<dbReference type="InterPro" id="IPR023411">
    <property type="entry name" value="RNaseA_AS"/>
</dbReference>
<dbReference type="InterPro" id="IPR023412">
    <property type="entry name" value="RNaseA_domain"/>
</dbReference>
<dbReference type="PANTHER" id="PTHR11437">
    <property type="entry name" value="RIBONUCLEASE"/>
    <property type="match status" value="1"/>
</dbReference>
<dbReference type="PANTHER" id="PTHR11437:SF25">
    <property type="entry name" value="RIBONUCLEASE 8"/>
    <property type="match status" value="1"/>
</dbReference>
<dbReference type="Pfam" id="PF00074">
    <property type="entry name" value="RnaseA"/>
    <property type="match status" value="1"/>
</dbReference>
<dbReference type="PRINTS" id="PR00794">
    <property type="entry name" value="RIBONUCLEASE"/>
</dbReference>
<dbReference type="SMART" id="SM00092">
    <property type="entry name" value="RNAse_Pc"/>
    <property type="match status" value="1"/>
</dbReference>
<dbReference type="SUPFAM" id="SSF54076">
    <property type="entry name" value="RNase A-like"/>
    <property type="match status" value="1"/>
</dbReference>
<dbReference type="PROSITE" id="PS00127">
    <property type="entry name" value="RNASE_PANCREATIC"/>
    <property type="match status" value="1"/>
</dbReference>
<sequence>MAPARAGCCALLLLLLGLWVAEIPVSAKPKDMTSSQWLKTQHMQPSPQACNSAMNNINKYTEQCKDLNTFLHELFSSVATTCQTPNIACKNSRKNCHQSHGPMSLTMCELTSGKYPNCRYKEKHLNAPYIAACDPPQQGDPGYPLVPVHLDKVV</sequence>
<proteinExistence type="inferred from homology"/>
<accession>A1YLB9</accession>
<feature type="signal peptide" evidence="2">
    <location>
        <begin position="1"/>
        <end position="27"/>
    </location>
</feature>
<feature type="chain" id="PRO_0000281854" description="Ribonuclease 8">
    <location>
        <begin position="28"/>
        <end position="154"/>
    </location>
</feature>
<feature type="active site" description="Proton acceptor" evidence="1">
    <location>
        <position position="42"/>
    </location>
</feature>
<feature type="active site" description="Proton donor" evidence="1">
    <location>
        <position position="149"/>
    </location>
</feature>
<feature type="binding site" evidence="1">
    <location>
        <begin position="65"/>
        <end position="69"/>
    </location>
    <ligand>
        <name>substrate</name>
    </ligand>
</feature>
<feature type="binding site" evidence="1">
    <location>
        <position position="90"/>
    </location>
    <ligand>
        <name>substrate</name>
    </ligand>
</feature>
<feature type="disulfide bond" evidence="1">
    <location>
        <begin position="64"/>
        <end position="118"/>
    </location>
</feature>
<feature type="disulfide bond" evidence="1">
    <location>
        <begin position="82"/>
        <end position="133"/>
    </location>
</feature>
<feature type="disulfide bond" evidence="1">
    <location>
        <begin position="89"/>
        <end position="96"/>
    </location>
</feature>
<name>RNAS8_PONPY</name>
<protein>
    <recommendedName>
        <fullName>Ribonuclease 8</fullName>
        <shortName>RNase 8</shortName>
        <ecNumber>3.1.27.-</ecNumber>
    </recommendedName>
</protein>